<feature type="initiator methionine" description="Removed" evidence="1">
    <location>
        <position position="1"/>
    </location>
</feature>
<feature type="chain" id="PRO_0000064581" description="Aliphatic amidase expression-regulating protein">
    <location>
        <begin position="2"/>
        <end position="385"/>
    </location>
</feature>
<feature type="sequence variant" description="In strain: PAC181; butyramide inducible phenotype.">
    <original>T</original>
    <variation>N</variation>
    <location>
        <position position="106"/>
    </location>
</feature>
<feature type="sequence conflict" description="In Ref. 1; CAA32024." evidence="2" ref="1">
    <original>QR</original>
    <variation>HA</variation>
    <location>
        <begin position="27"/>
        <end position="28"/>
    </location>
</feature>
<feature type="sequence conflict" description="In Ref. 1; CAA32024." evidence="2" ref="1">
    <original>V</original>
    <variation>L</variation>
    <location>
        <position position="186"/>
    </location>
</feature>
<feature type="sequence conflict" description="In Ref. 1; CAA32024." evidence="2" ref="1">
    <original>A</original>
    <variation>P</variation>
    <location>
        <position position="263"/>
    </location>
</feature>
<feature type="sequence conflict" description="In Ref. 1; CAA32024." evidence="2" ref="1">
    <original>S</original>
    <variation>N</variation>
    <location>
        <position position="305"/>
    </location>
</feature>
<feature type="sequence conflict" description="In Ref. 1; CAA32024." evidence="2" ref="1">
    <original>C</original>
    <variation>D</variation>
    <location>
        <position position="319"/>
    </location>
</feature>
<feature type="sequence conflict" description="In Ref. 1; CAA32024." evidence="2" ref="1">
    <original>A</original>
    <variation>P</variation>
    <location>
        <position position="383"/>
    </location>
</feature>
<feature type="strand" evidence="3">
    <location>
        <begin position="9"/>
        <end position="13"/>
    </location>
</feature>
<feature type="strand" evidence="3">
    <location>
        <begin position="16"/>
        <end position="18"/>
    </location>
</feature>
<feature type="helix" evidence="3">
    <location>
        <begin position="21"/>
        <end position="39"/>
    </location>
</feature>
<feature type="turn" evidence="3">
    <location>
        <begin position="40"/>
        <end position="43"/>
    </location>
</feature>
<feature type="strand" evidence="3">
    <location>
        <begin position="50"/>
        <end position="54"/>
    </location>
</feature>
<feature type="helix" evidence="3">
    <location>
        <begin position="60"/>
        <end position="72"/>
    </location>
</feature>
<feature type="strand" evidence="3">
    <location>
        <begin position="78"/>
        <end position="81"/>
    </location>
</feature>
<feature type="helix" evidence="3">
    <location>
        <begin position="85"/>
        <end position="97"/>
    </location>
</feature>
<feature type="strand" evidence="3">
    <location>
        <begin position="101"/>
        <end position="104"/>
    </location>
</feature>
<feature type="strand" evidence="3">
    <location>
        <begin position="117"/>
        <end position="119"/>
    </location>
</feature>
<feature type="helix" evidence="3">
    <location>
        <begin position="124"/>
        <end position="126"/>
    </location>
</feature>
<feature type="helix" evidence="3">
    <location>
        <begin position="128"/>
        <end position="136"/>
    </location>
</feature>
<feature type="turn" evidence="3">
    <location>
        <begin position="137"/>
        <end position="139"/>
    </location>
</feature>
<feature type="strand" evidence="3">
    <location>
        <begin position="141"/>
        <end position="150"/>
    </location>
</feature>
<feature type="helix" evidence="3">
    <location>
        <begin position="151"/>
        <end position="166"/>
    </location>
</feature>
<feature type="strand" evidence="3">
    <location>
        <begin position="170"/>
        <end position="177"/>
    </location>
</feature>
<feature type="helix" evidence="3">
    <location>
        <begin position="183"/>
        <end position="196"/>
    </location>
</feature>
<feature type="strand" evidence="3">
    <location>
        <begin position="199"/>
        <end position="204"/>
    </location>
</feature>
<feature type="helix" evidence="3">
    <location>
        <begin position="209"/>
        <end position="221"/>
    </location>
</feature>
<feature type="strand" evidence="3">
    <location>
        <begin position="229"/>
        <end position="233"/>
    </location>
</feature>
<feature type="helix" evidence="3">
    <location>
        <begin position="236"/>
        <end position="239"/>
    </location>
</feature>
<feature type="helix" evidence="3">
    <location>
        <begin position="244"/>
        <end position="247"/>
    </location>
</feature>
<feature type="strand" evidence="3">
    <location>
        <begin position="251"/>
        <end position="255"/>
    </location>
</feature>
<feature type="helix" evidence="3">
    <location>
        <begin position="263"/>
        <end position="273"/>
    </location>
</feature>
<feature type="helix" evidence="3">
    <location>
        <begin position="284"/>
        <end position="303"/>
    </location>
</feature>
<feature type="helix" evidence="3">
    <location>
        <begin position="308"/>
        <end position="315"/>
    </location>
</feature>
<feature type="strand" evidence="3">
    <location>
        <begin position="320"/>
        <end position="322"/>
    </location>
</feature>
<feature type="strand" evidence="3">
    <location>
        <begin position="325"/>
        <end position="329"/>
    </location>
</feature>
<feature type="turn" evidence="3">
    <location>
        <begin position="331"/>
        <end position="333"/>
    </location>
</feature>
<feature type="strand" evidence="3">
    <location>
        <begin position="336"/>
        <end position="338"/>
    </location>
</feature>
<feature type="strand" evidence="3">
    <location>
        <begin position="341"/>
        <end position="345"/>
    </location>
</feature>
<feature type="strand" evidence="3">
    <location>
        <begin position="351"/>
        <end position="356"/>
    </location>
</feature>
<feature type="helix" evidence="3">
    <location>
        <begin position="369"/>
        <end position="371"/>
    </location>
</feature>
<feature type="helix" evidence="4">
    <location>
        <begin position="372"/>
        <end position="378"/>
    </location>
</feature>
<sequence>MGSHQERPLIGLLFSETGVTADIERSQRYGALLAVEQLNREGGVGGRPIETLSQDPGGDPDRYRLCAEDFIRNRGVRFLVGCYMSHTRKAVMPVVERADALLCYPTPYEGFEYSPNIVYGGPAPNQNSAPLAAYLIRHYGERVVFIGSDYIYPRESNHVMRHLYRQHGGTVLEEIYIPLYPSDDDVQRAVERIYQARADVVFSTVVGTGTAELYRAIARRYGDGRRPPIASLTTSEAEVAKMESDVAEGQVVVAPYFSSIDTAASRAFVQACHGFFPENATITAWAEAAYWQTLLLGRAAQAAGSWRVEDVQRHLYDICIDAPQGPVRVERQNNHSRLSSRIAEIDARGVFQVRWQSPEPIRPDPYVVVHNLDDWSASMGGGALP</sequence>
<organism>
    <name type="scientific">Pseudomonas aeruginosa (strain ATCC 15692 / DSM 22644 / CIP 104116 / JCM 14847 / LMG 12228 / 1C / PRS 101 / PAO1)</name>
    <dbReference type="NCBI Taxonomy" id="208964"/>
    <lineage>
        <taxon>Bacteria</taxon>
        <taxon>Pseudomonadati</taxon>
        <taxon>Pseudomonadota</taxon>
        <taxon>Gammaproteobacteria</taxon>
        <taxon>Pseudomonadales</taxon>
        <taxon>Pseudomonadaceae</taxon>
        <taxon>Pseudomonas</taxon>
    </lineage>
</organism>
<reference key="1">
    <citation type="journal article" date="1991" name="J. Bacteriol.">
        <title>Cloning and DNA sequence of amiC, a new gene regulating expression of the Pseudomonas aeruginosa aliphatic amidase, and purification of the amiC product.</title>
        <authorList>
            <person name="Wilson S.A."/>
            <person name="Drew R.E."/>
        </authorList>
    </citation>
    <scope>NUCLEOTIDE SEQUENCE [GENOMIC DNA]</scope>
    <scope>PROTEIN SEQUENCE OF 2-19</scope>
    <source>
        <strain>PAC</strain>
    </source>
</reference>
<reference key="2">
    <citation type="journal article" date="2000" name="Nature">
        <title>Complete genome sequence of Pseudomonas aeruginosa PAO1, an opportunistic pathogen.</title>
        <authorList>
            <person name="Stover C.K."/>
            <person name="Pham X.-Q.T."/>
            <person name="Erwin A.L."/>
            <person name="Mizoguchi S.D."/>
            <person name="Warrener P."/>
            <person name="Hickey M.J."/>
            <person name="Brinkman F.S.L."/>
            <person name="Hufnagle W.O."/>
            <person name="Kowalik D.J."/>
            <person name="Lagrou M."/>
            <person name="Garber R.L."/>
            <person name="Goltry L."/>
            <person name="Tolentino E."/>
            <person name="Westbrock-Wadman S."/>
            <person name="Yuan Y."/>
            <person name="Brody L.L."/>
            <person name="Coulter S.N."/>
            <person name="Folger K.R."/>
            <person name="Kas A."/>
            <person name="Larbig K."/>
            <person name="Lim R.M."/>
            <person name="Smith K.A."/>
            <person name="Spencer D.H."/>
            <person name="Wong G.K.-S."/>
            <person name="Wu Z."/>
            <person name="Paulsen I.T."/>
            <person name="Reizer J."/>
            <person name="Saier M.H. Jr."/>
            <person name="Hancock R.E.W."/>
            <person name="Lory S."/>
            <person name="Olson M.V."/>
        </authorList>
    </citation>
    <scope>NUCLEOTIDE SEQUENCE [LARGE SCALE GENOMIC DNA]</scope>
    <source>
        <strain>ATCC 15692 / DSM 22644 / CIP 104116 / JCM 14847 / LMG 12228 / 1C / PRS 101 / PAO1</strain>
    </source>
</reference>
<reference key="3">
    <citation type="journal article" date="1991" name="J. Mol. Biol.">
        <title>Crystallization of and preliminary X-ray data for the negative regulator (AmiC) of the amidase operon of Pseudomonas aeruginosa.</title>
        <authorList>
            <person name="Wilson S.A."/>
            <person name="Chayen N.E."/>
            <person name="Hemmings A.M."/>
            <person name="Drew R.E."/>
            <person name="Pearl L.H."/>
        </authorList>
    </citation>
    <scope>CRYSTALLIZATION</scope>
</reference>
<reference key="4">
    <citation type="journal article" date="1994" name="EMBO J.">
        <title>Crystal structure of AmiC: the controller of transcription antitermination in the amidase operon of Pseudomonas aeruginosa.</title>
        <authorList>
            <person name="Pearl L.H."/>
            <person name="O'Hara B.P."/>
            <person name="Drew R.E."/>
            <person name="Wilson S.A."/>
        </authorList>
    </citation>
    <scope>X-RAY CRYSTALLOGRAPHY (2.1 ANGSTROMS)</scope>
    <scope>SEQUENCE REVISION TO 27-28</scope>
</reference>
<reference key="5">
    <citation type="journal article" date="1999" name="EMBO J.">
        <title>Crystal structure and induction mechanism of AmiC-AmiR: a ligand-regulated transcription antitermination complex.</title>
        <authorList>
            <person name="O'Hara B.P."/>
            <person name="Norman R.A."/>
            <person name="Wan P.T."/>
            <person name="Roe S.M."/>
            <person name="Barrett T.E."/>
            <person name="Drew R.E."/>
            <person name="Pearl L.H."/>
        </authorList>
    </citation>
    <scope>X-RAY CRYSTALLOGRAPHY (2.25 ANGSTROMS) OF COMPLEX WITH AMIR</scope>
    <source>
        <strain>PAC1</strain>
    </source>
</reference>
<reference key="6">
    <citation type="journal article" date="2000" name="Protein Eng.">
        <title>Structural adaptation to selective pressure for altered ligand specificity in the Pseudomonas aeruginosa amide receptor, AmiC.</title>
        <authorList>
            <person name="O'Hara B.P."/>
            <person name="Wilson S.A."/>
            <person name="Lee A.W."/>
            <person name="Roe S.M."/>
            <person name="Siligardi G."/>
            <person name="Drew R.E."/>
            <person name="Pearl L.H."/>
        </authorList>
    </citation>
    <scope>X-RAY CRYSTALLOGRAPHY (2.7 ANGSTROMS)</scope>
    <source>
        <strain>PAC1</strain>
    </source>
</reference>
<evidence type="ECO:0000269" key="1">
    <source>
    </source>
</evidence>
<evidence type="ECO:0000305" key="2"/>
<evidence type="ECO:0007829" key="3">
    <source>
        <dbReference type="PDB" id="1PEA"/>
    </source>
</evidence>
<evidence type="ECO:0007829" key="4">
    <source>
        <dbReference type="PDB" id="1QO0"/>
    </source>
</evidence>
<keyword id="KW-0002">3D-structure</keyword>
<keyword id="KW-0903">Direct protein sequencing</keyword>
<keyword id="KW-0418">Kinase</keyword>
<keyword id="KW-1185">Reference proteome</keyword>
<keyword id="KW-0678">Repressor</keyword>
<keyword id="KW-0808">Transferase</keyword>
<name>AMIC_PSEAE</name>
<proteinExistence type="evidence at protein level"/>
<comment type="function">
    <text>Negatively regulates the expression of the aliphatic amidase operon. AmiC functions by inhibiting the action of AmiR at the protein level. It exhibits protein kinase activity.</text>
</comment>
<comment type="subunit">
    <text>Homodimer. Forms a complex with AmiR.</text>
</comment>
<comment type="domain">
    <text>Consists of two beta-alpha-beta domains with a central cleft in which the amide binds.</text>
</comment>
<accession>P27017</accession>
<gene>
    <name type="primary">amiC</name>
    <name type="ordered locus">PA3364</name>
</gene>
<protein>
    <recommendedName>
        <fullName>Aliphatic amidase expression-regulating protein</fullName>
    </recommendedName>
</protein>
<dbReference type="EMBL" id="X13776">
    <property type="protein sequence ID" value="CAA32024.1"/>
    <property type="molecule type" value="Genomic_DNA"/>
</dbReference>
<dbReference type="EMBL" id="AE004091">
    <property type="protein sequence ID" value="AAG06752.1"/>
    <property type="molecule type" value="Genomic_DNA"/>
</dbReference>
<dbReference type="PIR" id="A40359">
    <property type="entry name" value="A40359"/>
</dbReference>
<dbReference type="PIR" id="C83226">
    <property type="entry name" value="C83226"/>
</dbReference>
<dbReference type="RefSeq" id="NP_252054.1">
    <property type="nucleotide sequence ID" value="NC_002516.2"/>
</dbReference>
<dbReference type="RefSeq" id="WP_003091751.1">
    <property type="nucleotide sequence ID" value="NZ_QZGE01000017.1"/>
</dbReference>
<dbReference type="PDB" id="1PEA">
    <property type="method" value="X-ray"/>
    <property type="resolution" value="2.10 A"/>
    <property type="chains" value="A=1-385"/>
</dbReference>
<dbReference type="PDB" id="1QNL">
    <property type="method" value="X-ray"/>
    <property type="resolution" value="2.70 A"/>
    <property type="chains" value="A=1-375"/>
</dbReference>
<dbReference type="PDB" id="1QO0">
    <property type="method" value="X-ray"/>
    <property type="resolution" value="2.25 A"/>
    <property type="chains" value="A/B=1-380"/>
</dbReference>
<dbReference type="PDBsum" id="1PEA"/>
<dbReference type="PDBsum" id="1QNL"/>
<dbReference type="PDBsum" id="1QO0"/>
<dbReference type="SMR" id="P27017"/>
<dbReference type="IntAct" id="P27017">
    <property type="interactions" value="1"/>
</dbReference>
<dbReference type="STRING" id="208964.PA3364"/>
<dbReference type="DrugBank" id="DB02736">
    <property type="generic name" value="Acetamide"/>
</dbReference>
<dbReference type="DrugBank" id="DB02121">
    <property type="generic name" value="Butyramide"/>
</dbReference>
<dbReference type="PaxDb" id="208964-PA3364"/>
<dbReference type="GeneID" id="877798"/>
<dbReference type="KEGG" id="pae:PA3364"/>
<dbReference type="PATRIC" id="fig|208964.12.peg.3523"/>
<dbReference type="PseudoCAP" id="PA3364"/>
<dbReference type="HOGENOM" id="CLU_027128_1_1_6"/>
<dbReference type="InParanoid" id="P27017"/>
<dbReference type="OrthoDB" id="5288800at2"/>
<dbReference type="PhylomeDB" id="P27017"/>
<dbReference type="BioCyc" id="PAER208964:G1FZ6-3428-MONOMER"/>
<dbReference type="EvolutionaryTrace" id="P27017"/>
<dbReference type="Proteomes" id="UP000002438">
    <property type="component" value="Chromosome"/>
</dbReference>
<dbReference type="GO" id="GO:0033218">
    <property type="term" value="F:amide binding"/>
    <property type="evidence" value="ECO:0000314"/>
    <property type="project" value="PseudoCAP"/>
</dbReference>
<dbReference type="GO" id="GO:0016301">
    <property type="term" value="F:kinase activity"/>
    <property type="evidence" value="ECO:0007669"/>
    <property type="project" value="UniProtKB-KW"/>
</dbReference>
<dbReference type="GO" id="GO:0006865">
    <property type="term" value="P:amino acid transport"/>
    <property type="evidence" value="ECO:0007669"/>
    <property type="project" value="InterPro"/>
</dbReference>
<dbReference type="GO" id="GO:0034251">
    <property type="term" value="P:regulation of amide catabolic process"/>
    <property type="evidence" value="ECO:0000314"/>
    <property type="project" value="PseudoCAP"/>
</dbReference>
<dbReference type="CDD" id="cd06357">
    <property type="entry name" value="PBP1_AmiC"/>
    <property type="match status" value="1"/>
</dbReference>
<dbReference type="Gene3D" id="3.40.50.2300">
    <property type="match status" value="2"/>
</dbReference>
<dbReference type="InterPro" id="IPR039570">
    <property type="entry name" value="AmiC_PBP1"/>
</dbReference>
<dbReference type="InterPro" id="IPR000709">
    <property type="entry name" value="Leu_Ile_Val-bd"/>
</dbReference>
<dbReference type="InterPro" id="IPR028082">
    <property type="entry name" value="Peripla_BP_I"/>
</dbReference>
<dbReference type="PANTHER" id="PTHR47628">
    <property type="match status" value="1"/>
</dbReference>
<dbReference type="PANTHER" id="PTHR47628:SF1">
    <property type="entry name" value="ALIPHATIC AMIDASE EXPRESSION-REGULATING PROTEIN"/>
    <property type="match status" value="1"/>
</dbReference>
<dbReference type="Pfam" id="PF13433">
    <property type="entry name" value="Peripla_BP_5"/>
    <property type="match status" value="1"/>
</dbReference>
<dbReference type="PRINTS" id="PR00337">
    <property type="entry name" value="LEUILEVALBP"/>
</dbReference>
<dbReference type="SUPFAM" id="SSF53822">
    <property type="entry name" value="Periplasmic binding protein-like I"/>
    <property type="match status" value="1"/>
</dbReference>